<reference key="1">
    <citation type="journal article" date="2003" name="Proc. Natl. Acad. Sci. U.S.A.">
        <title>Reductive genome evolution in Buchnera aphidicola.</title>
        <authorList>
            <person name="van Ham R.C.H.J."/>
            <person name="Kamerbeek J."/>
            <person name="Palacios C."/>
            <person name="Rausell C."/>
            <person name="Abascal F."/>
            <person name="Bastolla U."/>
            <person name="Fernandez J.M."/>
            <person name="Jimenez L."/>
            <person name="Postigo M."/>
            <person name="Silva F.J."/>
            <person name="Tamames J."/>
            <person name="Viguera E."/>
            <person name="Latorre A."/>
            <person name="Valencia A."/>
            <person name="Moran F."/>
            <person name="Moya A."/>
        </authorList>
    </citation>
    <scope>NUCLEOTIDE SEQUENCE [LARGE SCALE GENOMIC DNA]</scope>
    <source>
        <strain>Bp</strain>
    </source>
</reference>
<feature type="chain" id="PRO_0000166183" description="Iron-sulfur cluster assembly scaffold protein IscU">
    <location>
        <begin position="1"/>
        <end position="126"/>
    </location>
</feature>
<comment type="function">
    <text evidence="1">A scaffold on which IscS assembles Fe-S clusters. Subsequently gives the nascent cluster to other proteins. It is likely that Fe-S cluster coordination is flexible as the role of this complex is to build and then hand off Fe-S clusters (By similarity).</text>
</comment>
<comment type="subunit">
    <text evidence="1">Forms a heterotetramer with IscS; each subunit of the IscS dimer contacts an IscU monomer.</text>
</comment>
<comment type="similarity">
    <text evidence="2">Belongs to the NifU family.</text>
</comment>
<organism>
    <name type="scientific">Buchnera aphidicola subsp. Baizongia pistaciae (strain Bp)</name>
    <dbReference type="NCBI Taxonomy" id="224915"/>
    <lineage>
        <taxon>Bacteria</taxon>
        <taxon>Pseudomonadati</taxon>
        <taxon>Pseudomonadota</taxon>
        <taxon>Gammaproteobacteria</taxon>
        <taxon>Enterobacterales</taxon>
        <taxon>Erwiniaceae</taxon>
        <taxon>Buchnera</taxon>
    </lineage>
</organism>
<proteinExistence type="inferred from homology"/>
<accession>Q89A18</accession>
<sequence>MAYSKKVIDHYENPRNVGSFKTIDANVGSGLVGAPACGDVMKLQIKVNKNGIIQDACFKTYGCGSAIASSSLVTEWIKGKSLIEAENIKNTNIAEELDLPPVKIHCSILAEDAIKAAITDYKNKNK</sequence>
<gene>
    <name type="primary">nifU</name>
    <name type="synonym">iscU</name>
    <name type="ordered locus">bbp_545</name>
</gene>
<evidence type="ECO:0000250" key="1"/>
<evidence type="ECO:0000305" key="2"/>
<name>ISCU_BUCBP</name>
<protein>
    <recommendedName>
        <fullName>Iron-sulfur cluster assembly scaffold protein IscU</fullName>
    </recommendedName>
    <alternativeName>
        <fullName>Sulfur acceptor protein IscU</fullName>
    </alternativeName>
</protein>
<keyword id="KW-1185">Reference proteome</keyword>
<dbReference type="EMBL" id="AE016826">
    <property type="protein sequence ID" value="AAO27243.1"/>
    <property type="molecule type" value="Genomic_DNA"/>
</dbReference>
<dbReference type="RefSeq" id="WP_011091644.1">
    <property type="nucleotide sequence ID" value="NC_004545.1"/>
</dbReference>
<dbReference type="SMR" id="Q89A18"/>
<dbReference type="STRING" id="224915.bbp_545"/>
<dbReference type="KEGG" id="bab:bbp_545"/>
<dbReference type="eggNOG" id="COG0822">
    <property type="taxonomic scope" value="Bacteria"/>
</dbReference>
<dbReference type="HOGENOM" id="CLU_079283_5_0_6"/>
<dbReference type="OrthoDB" id="9808097at2"/>
<dbReference type="Proteomes" id="UP000000601">
    <property type="component" value="Chromosome"/>
</dbReference>
<dbReference type="GO" id="GO:0005737">
    <property type="term" value="C:cytoplasm"/>
    <property type="evidence" value="ECO:0007669"/>
    <property type="project" value="UniProtKB-ARBA"/>
</dbReference>
<dbReference type="GO" id="GO:0005506">
    <property type="term" value="F:iron ion binding"/>
    <property type="evidence" value="ECO:0007669"/>
    <property type="project" value="InterPro"/>
</dbReference>
<dbReference type="GO" id="GO:0051536">
    <property type="term" value="F:iron-sulfur cluster binding"/>
    <property type="evidence" value="ECO:0007669"/>
    <property type="project" value="InterPro"/>
</dbReference>
<dbReference type="GO" id="GO:0016226">
    <property type="term" value="P:iron-sulfur cluster assembly"/>
    <property type="evidence" value="ECO:0007669"/>
    <property type="project" value="InterPro"/>
</dbReference>
<dbReference type="CDD" id="cd06664">
    <property type="entry name" value="IscU_like"/>
    <property type="match status" value="1"/>
</dbReference>
<dbReference type="FunFam" id="3.90.1010.10:FF:000001">
    <property type="entry name" value="Iron-sulfur cluster assembly scaffold protein IscU"/>
    <property type="match status" value="1"/>
</dbReference>
<dbReference type="Gene3D" id="3.90.1010.10">
    <property type="match status" value="1"/>
</dbReference>
<dbReference type="InterPro" id="IPR011339">
    <property type="entry name" value="ISCU"/>
</dbReference>
<dbReference type="InterPro" id="IPR002871">
    <property type="entry name" value="NIF_FeS_clus_asmbl_NifU_N"/>
</dbReference>
<dbReference type="NCBIfam" id="TIGR01999">
    <property type="entry name" value="iscU"/>
    <property type="match status" value="1"/>
</dbReference>
<dbReference type="PANTHER" id="PTHR10093">
    <property type="entry name" value="IRON-SULFUR CLUSTER ASSEMBLY ENZYME NIFU HOMOLOG"/>
    <property type="match status" value="1"/>
</dbReference>
<dbReference type="Pfam" id="PF01592">
    <property type="entry name" value="NifU_N"/>
    <property type="match status" value="1"/>
</dbReference>
<dbReference type="SUPFAM" id="SSF82649">
    <property type="entry name" value="SufE/NifU"/>
    <property type="match status" value="1"/>
</dbReference>